<gene>
    <name type="primary">RPN14</name>
    <name type="ordered locus">YGL004C</name>
</gene>
<keyword id="KW-0002">3D-structure</keyword>
<keyword id="KW-0143">Chaperone</keyword>
<keyword id="KW-0963">Cytoplasm</keyword>
<keyword id="KW-0539">Nucleus</keyword>
<keyword id="KW-0647">Proteasome</keyword>
<keyword id="KW-1185">Reference proteome</keyword>
<keyword id="KW-0677">Repeat</keyword>
<keyword id="KW-0853">WD repeat</keyword>
<dbReference type="EMBL" id="Z72526">
    <property type="protein sequence ID" value="CAA96704.1"/>
    <property type="molecule type" value="Genomic_DNA"/>
</dbReference>
<dbReference type="EMBL" id="AY692599">
    <property type="protein sequence ID" value="AAT92618.1"/>
    <property type="molecule type" value="Genomic_DNA"/>
</dbReference>
<dbReference type="EMBL" id="BK006941">
    <property type="protein sequence ID" value="DAA08095.1"/>
    <property type="molecule type" value="Genomic_DNA"/>
</dbReference>
<dbReference type="PIR" id="S64006">
    <property type="entry name" value="S64006"/>
</dbReference>
<dbReference type="RefSeq" id="NP_011511.3">
    <property type="nucleotide sequence ID" value="NM_001180869.3"/>
</dbReference>
<dbReference type="PDB" id="3ACP">
    <property type="method" value="X-ray"/>
    <property type="resolution" value="2.00 A"/>
    <property type="chains" value="A=1-417"/>
</dbReference>
<dbReference type="PDB" id="3VL1">
    <property type="method" value="X-ray"/>
    <property type="resolution" value="1.60 A"/>
    <property type="chains" value="A/B=1-417"/>
</dbReference>
<dbReference type="PDBsum" id="3ACP"/>
<dbReference type="PDBsum" id="3VL1"/>
<dbReference type="SMR" id="P53196"/>
<dbReference type="BioGRID" id="33241">
    <property type="interactions" value="64"/>
</dbReference>
<dbReference type="DIP" id="DIP-6617N"/>
<dbReference type="FunCoup" id="P53196">
    <property type="interactions" value="135"/>
</dbReference>
<dbReference type="IntAct" id="P53196">
    <property type="interactions" value="47"/>
</dbReference>
<dbReference type="MINT" id="P53196"/>
<dbReference type="STRING" id="4932.YGL004C"/>
<dbReference type="iPTMnet" id="P53196"/>
<dbReference type="PaxDb" id="4932-YGL004C"/>
<dbReference type="PeptideAtlas" id="P53196"/>
<dbReference type="EnsemblFungi" id="YGL004C_mRNA">
    <property type="protein sequence ID" value="YGL004C"/>
    <property type="gene ID" value="YGL004C"/>
</dbReference>
<dbReference type="GeneID" id="852880"/>
<dbReference type="KEGG" id="sce:YGL004C"/>
<dbReference type="AGR" id="SGD:S000002972"/>
<dbReference type="SGD" id="S000002972">
    <property type="gene designation" value="RPN14"/>
</dbReference>
<dbReference type="VEuPathDB" id="FungiDB:YGL004C"/>
<dbReference type="eggNOG" id="KOG0266">
    <property type="taxonomic scope" value="Eukaryota"/>
</dbReference>
<dbReference type="HOGENOM" id="CLU_037051_3_1_1"/>
<dbReference type="InParanoid" id="P53196"/>
<dbReference type="OMA" id="GYENGML"/>
<dbReference type="OrthoDB" id="10257301at2759"/>
<dbReference type="BioCyc" id="YEAST:G3O-30528-MONOMER"/>
<dbReference type="BioGRID-ORCS" id="852880">
    <property type="hits" value="0 hits in 10 CRISPR screens"/>
</dbReference>
<dbReference type="EvolutionaryTrace" id="P53196"/>
<dbReference type="PRO" id="PR:P53196"/>
<dbReference type="Proteomes" id="UP000002311">
    <property type="component" value="Chromosome VII"/>
</dbReference>
<dbReference type="RNAct" id="P53196">
    <property type="molecule type" value="protein"/>
</dbReference>
<dbReference type="GO" id="GO:0005737">
    <property type="term" value="C:cytoplasm"/>
    <property type="evidence" value="ECO:0007005"/>
    <property type="project" value="SGD"/>
</dbReference>
<dbReference type="GO" id="GO:0005829">
    <property type="term" value="C:cytosol"/>
    <property type="evidence" value="ECO:0000314"/>
    <property type="project" value="SGD"/>
</dbReference>
<dbReference type="GO" id="GO:0005634">
    <property type="term" value="C:nucleus"/>
    <property type="evidence" value="ECO:0000314"/>
    <property type="project" value="SGD"/>
</dbReference>
<dbReference type="GO" id="GO:0000502">
    <property type="term" value="C:proteasome complex"/>
    <property type="evidence" value="ECO:0007669"/>
    <property type="project" value="UniProtKB-KW"/>
</dbReference>
<dbReference type="GO" id="GO:0044183">
    <property type="term" value="F:protein folding chaperone"/>
    <property type="evidence" value="ECO:0000314"/>
    <property type="project" value="SGD"/>
</dbReference>
<dbReference type="GO" id="GO:0070682">
    <property type="term" value="P:proteasome regulatory particle assembly"/>
    <property type="evidence" value="ECO:0000315"/>
    <property type="project" value="SGD"/>
</dbReference>
<dbReference type="GO" id="GO:0006511">
    <property type="term" value="P:ubiquitin-dependent protein catabolic process"/>
    <property type="evidence" value="ECO:0000315"/>
    <property type="project" value="SGD"/>
</dbReference>
<dbReference type="Gene3D" id="2.130.10.10">
    <property type="entry name" value="YVTN repeat-like/Quinoprotein amine dehydrogenase"/>
    <property type="match status" value="2"/>
</dbReference>
<dbReference type="InterPro" id="IPR015943">
    <property type="entry name" value="WD40/YVTN_repeat-like_dom_sf"/>
</dbReference>
<dbReference type="InterPro" id="IPR036322">
    <property type="entry name" value="WD40_repeat_dom_sf"/>
</dbReference>
<dbReference type="InterPro" id="IPR001680">
    <property type="entry name" value="WD40_rpt"/>
</dbReference>
<dbReference type="InterPro" id="IPR051179">
    <property type="entry name" value="WD_repeat_multifunction"/>
</dbReference>
<dbReference type="PANTHER" id="PTHR19857:SF19">
    <property type="entry name" value="26S PROTEASOME REGULATORY SUBUNIT RPN14"/>
    <property type="match status" value="1"/>
</dbReference>
<dbReference type="PANTHER" id="PTHR19857">
    <property type="entry name" value="MITOCHONDRIAL DIVISION PROTEIN 1-RELATED"/>
    <property type="match status" value="1"/>
</dbReference>
<dbReference type="Pfam" id="PF00400">
    <property type="entry name" value="WD40"/>
    <property type="match status" value="2"/>
</dbReference>
<dbReference type="SMART" id="SM00320">
    <property type="entry name" value="WD40"/>
    <property type="match status" value="4"/>
</dbReference>
<dbReference type="SUPFAM" id="SSF50978">
    <property type="entry name" value="WD40 repeat-like"/>
    <property type="match status" value="1"/>
</dbReference>
<dbReference type="PROSITE" id="PS00678">
    <property type="entry name" value="WD_REPEATS_1"/>
    <property type="match status" value="1"/>
</dbReference>
<dbReference type="PROSITE" id="PS50082">
    <property type="entry name" value="WD_REPEATS_2"/>
    <property type="match status" value="2"/>
</dbReference>
<dbReference type="PROSITE" id="PS50294">
    <property type="entry name" value="WD_REPEATS_REGION"/>
    <property type="match status" value="1"/>
</dbReference>
<feature type="chain" id="PRO_0000051475" description="26S proteasome regulatory subunit RPN14">
    <location>
        <begin position="1"/>
        <end position="417"/>
    </location>
</feature>
<feature type="repeat" description="WD 1">
    <location>
        <begin position="134"/>
        <end position="173"/>
    </location>
</feature>
<feature type="repeat" description="WD 2">
    <location>
        <begin position="176"/>
        <end position="215"/>
    </location>
</feature>
<feature type="repeat" description="WD 3">
    <location>
        <begin position="242"/>
        <end position="281"/>
    </location>
</feature>
<feature type="repeat" description="WD 4">
    <location>
        <begin position="285"/>
        <end position="325"/>
    </location>
</feature>
<feature type="repeat" description="WD 5">
    <location>
        <begin position="330"/>
        <end position="371"/>
    </location>
</feature>
<feature type="repeat" description="WD 6">
    <location>
        <begin position="380"/>
        <end position="416"/>
    </location>
</feature>
<feature type="strand" evidence="8">
    <location>
        <begin position="3"/>
        <end position="5"/>
    </location>
</feature>
<feature type="strand" evidence="8">
    <location>
        <begin position="8"/>
        <end position="10"/>
    </location>
</feature>
<feature type="helix" evidence="8">
    <location>
        <begin position="14"/>
        <end position="19"/>
    </location>
</feature>
<feature type="strand" evidence="8">
    <location>
        <begin position="27"/>
        <end position="35"/>
    </location>
</feature>
<feature type="strand" evidence="8">
    <location>
        <begin position="38"/>
        <end position="45"/>
    </location>
</feature>
<feature type="turn" evidence="8">
    <location>
        <begin position="49"/>
        <end position="51"/>
    </location>
</feature>
<feature type="strand" evidence="8">
    <location>
        <begin position="60"/>
        <end position="65"/>
    </location>
</feature>
<feature type="strand" evidence="8">
    <location>
        <begin position="68"/>
        <end position="73"/>
    </location>
</feature>
<feature type="strand" evidence="8">
    <location>
        <begin position="76"/>
        <end position="81"/>
    </location>
</feature>
<feature type="strand" evidence="8">
    <location>
        <begin position="84"/>
        <end position="86"/>
    </location>
</feature>
<feature type="turn" evidence="8">
    <location>
        <begin position="87"/>
        <end position="90"/>
    </location>
</feature>
<feature type="strand" evidence="8">
    <location>
        <begin position="96"/>
        <end position="102"/>
    </location>
</feature>
<feature type="strand" evidence="8">
    <location>
        <begin position="104"/>
        <end position="106"/>
    </location>
</feature>
<feature type="strand" evidence="8">
    <location>
        <begin position="108"/>
        <end position="113"/>
    </location>
</feature>
<feature type="strand" evidence="8">
    <location>
        <begin position="118"/>
        <end position="121"/>
    </location>
</feature>
<feature type="strand" evidence="8">
    <location>
        <begin position="127"/>
        <end position="131"/>
    </location>
</feature>
<feature type="strand" evidence="8">
    <location>
        <begin position="134"/>
        <end position="137"/>
    </location>
</feature>
<feature type="strand" evidence="8">
    <location>
        <begin position="139"/>
        <end position="144"/>
    </location>
</feature>
<feature type="strand" evidence="8">
    <location>
        <begin position="148"/>
        <end position="155"/>
    </location>
</feature>
<feature type="strand" evidence="8">
    <location>
        <begin position="158"/>
        <end position="164"/>
    </location>
</feature>
<feature type="turn" evidence="8">
    <location>
        <begin position="165"/>
        <end position="167"/>
    </location>
</feature>
<feature type="strand" evidence="8">
    <location>
        <begin position="172"/>
        <end position="175"/>
    </location>
</feature>
<feature type="strand" evidence="8">
    <location>
        <begin position="181"/>
        <end position="187"/>
    </location>
</feature>
<feature type="turn" evidence="8">
    <location>
        <begin position="188"/>
        <end position="191"/>
    </location>
</feature>
<feature type="strand" evidence="8">
    <location>
        <begin position="192"/>
        <end position="197"/>
    </location>
</feature>
<feature type="strand" evidence="8">
    <location>
        <begin position="202"/>
        <end position="206"/>
    </location>
</feature>
<feature type="turn" evidence="8">
    <location>
        <begin position="207"/>
        <end position="210"/>
    </location>
</feature>
<feature type="strand" evidence="8">
    <location>
        <begin position="211"/>
        <end position="216"/>
    </location>
</feature>
<feature type="strand" evidence="8">
    <location>
        <begin position="226"/>
        <end position="233"/>
    </location>
</feature>
<feature type="helix" evidence="8">
    <location>
        <begin position="240"/>
        <end position="242"/>
    </location>
</feature>
<feature type="strand" evidence="8">
    <location>
        <begin position="257"/>
        <end position="263"/>
    </location>
</feature>
<feature type="strand" evidence="8">
    <location>
        <begin position="268"/>
        <end position="272"/>
    </location>
</feature>
<feature type="turn" evidence="8">
    <location>
        <begin position="273"/>
        <end position="275"/>
    </location>
</feature>
<feature type="strand" evidence="8">
    <location>
        <begin position="278"/>
        <end position="282"/>
    </location>
</feature>
<feature type="strand" evidence="8">
    <location>
        <begin position="290"/>
        <end position="295"/>
    </location>
</feature>
<feature type="strand" evidence="8">
    <location>
        <begin position="302"/>
        <end position="307"/>
    </location>
</feature>
<feature type="strand" evidence="8">
    <location>
        <begin position="310"/>
        <end position="316"/>
    </location>
</feature>
<feature type="strand" evidence="8">
    <location>
        <begin position="324"/>
        <end position="330"/>
    </location>
</feature>
<feature type="strand" evidence="8">
    <location>
        <begin position="335"/>
        <end position="341"/>
    </location>
</feature>
<feature type="strand" evidence="8">
    <location>
        <begin position="344"/>
        <end position="349"/>
    </location>
</feature>
<feature type="turn" evidence="8">
    <location>
        <begin position="350"/>
        <end position="352"/>
    </location>
</feature>
<feature type="strand" evidence="8">
    <location>
        <begin position="353"/>
        <end position="360"/>
    </location>
</feature>
<feature type="strand" evidence="7">
    <location>
        <begin position="366"/>
        <end position="370"/>
    </location>
</feature>
<feature type="strand" evidence="8">
    <location>
        <begin position="376"/>
        <end position="378"/>
    </location>
</feature>
<feature type="strand" evidence="8">
    <location>
        <begin position="387"/>
        <end position="391"/>
    </location>
</feature>
<feature type="strand" evidence="8">
    <location>
        <begin position="394"/>
        <end position="397"/>
    </location>
</feature>
<feature type="strand" evidence="8">
    <location>
        <begin position="399"/>
        <end position="404"/>
    </location>
</feature>
<feature type="turn" evidence="8">
    <location>
        <begin position="405"/>
        <end position="407"/>
    </location>
</feature>
<feature type="strand" evidence="8">
    <location>
        <begin position="408"/>
        <end position="414"/>
    </location>
</feature>
<reference key="1">
    <citation type="journal article" date="1997" name="Nature">
        <title>The nucleotide sequence of Saccharomyces cerevisiae chromosome VII.</title>
        <authorList>
            <person name="Tettelin H."/>
            <person name="Agostoni-Carbone M.L."/>
            <person name="Albermann K."/>
            <person name="Albers M."/>
            <person name="Arroyo J."/>
            <person name="Backes U."/>
            <person name="Barreiros T."/>
            <person name="Bertani I."/>
            <person name="Bjourson A.J."/>
            <person name="Brueckner M."/>
            <person name="Bruschi C.V."/>
            <person name="Carignani G."/>
            <person name="Castagnoli L."/>
            <person name="Cerdan E."/>
            <person name="Clemente M.L."/>
            <person name="Coblenz A."/>
            <person name="Coglievina M."/>
            <person name="Coissac E."/>
            <person name="Defoor E."/>
            <person name="Del Bino S."/>
            <person name="Delius H."/>
            <person name="Delneri D."/>
            <person name="de Wergifosse P."/>
            <person name="Dujon B."/>
            <person name="Durand P."/>
            <person name="Entian K.-D."/>
            <person name="Eraso P."/>
            <person name="Escribano V."/>
            <person name="Fabiani L."/>
            <person name="Fartmann B."/>
            <person name="Feroli F."/>
            <person name="Feuermann M."/>
            <person name="Frontali L."/>
            <person name="Garcia-Gonzalez M."/>
            <person name="Garcia-Saez M.I."/>
            <person name="Goffeau A."/>
            <person name="Guerreiro P."/>
            <person name="Hani J."/>
            <person name="Hansen M."/>
            <person name="Hebling U."/>
            <person name="Hernandez K."/>
            <person name="Heumann K."/>
            <person name="Hilger F."/>
            <person name="Hofmann B."/>
            <person name="Indge K.J."/>
            <person name="James C.M."/>
            <person name="Klima R."/>
            <person name="Koetter P."/>
            <person name="Kramer B."/>
            <person name="Kramer W."/>
            <person name="Lauquin G."/>
            <person name="Leuther H."/>
            <person name="Louis E.J."/>
            <person name="Maillier E."/>
            <person name="Marconi A."/>
            <person name="Martegani E."/>
            <person name="Mazon M.J."/>
            <person name="Mazzoni C."/>
            <person name="McReynolds A.D.K."/>
            <person name="Melchioretto P."/>
            <person name="Mewes H.-W."/>
            <person name="Minenkova O."/>
            <person name="Mueller-Auer S."/>
            <person name="Nawrocki A."/>
            <person name="Netter P."/>
            <person name="Neu R."/>
            <person name="Nombela C."/>
            <person name="Oliver S.G."/>
            <person name="Panzeri L."/>
            <person name="Paoluzi S."/>
            <person name="Plevani P."/>
            <person name="Portetelle D."/>
            <person name="Portillo F."/>
            <person name="Potier S."/>
            <person name="Purnelle B."/>
            <person name="Rieger M."/>
            <person name="Riles L."/>
            <person name="Rinaldi T."/>
            <person name="Robben J."/>
            <person name="Rodrigues-Pousada C."/>
            <person name="Rodriguez-Belmonte E."/>
            <person name="Rodriguez-Torres A.M."/>
            <person name="Rose M."/>
            <person name="Ruzzi M."/>
            <person name="Saliola M."/>
            <person name="Sanchez-Perez M."/>
            <person name="Schaefer B."/>
            <person name="Schaefer M."/>
            <person name="Scharfe M."/>
            <person name="Schmidheini T."/>
            <person name="Schreer A."/>
            <person name="Skala J."/>
            <person name="Souciet J.-L."/>
            <person name="Steensma H.Y."/>
            <person name="Talla E."/>
            <person name="Thierry A."/>
            <person name="Vandenbol M."/>
            <person name="van der Aart Q.J.M."/>
            <person name="Van Dyck L."/>
            <person name="Vanoni M."/>
            <person name="Verhasselt P."/>
            <person name="Voet M."/>
            <person name="Volckaert G."/>
            <person name="Wambutt R."/>
            <person name="Watson M.D."/>
            <person name="Weber N."/>
            <person name="Wedler E."/>
            <person name="Wedler H."/>
            <person name="Wipfli P."/>
            <person name="Wolf K."/>
            <person name="Wright L.F."/>
            <person name="Zaccaria P."/>
            <person name="Zimmermann M."/>
            <person name="Zollner A."/>
            <person name="Kleine K."/>
        </authorList>
    </citation>
    <scope>NUCLEOTIDE SEQUENCE [LARGE SCALE GENOMIC DNA]</scope>
    <source>
        <strain>ATCC 204508 / S288c</strain>
    </source>
</reference>
<reference key="2">
    <citation type="journal article" date="2014" name="G3 (Bethesda)">
        <title>The reference genome sequence of Saccharomyces cerevisiae: Then and now.</title>
        <authorList>
            <person name="Engel S.R."/>
            <person name="Dietrich F.S."/>
            <person name="Fisk D.G."/>
            <person name="Binkley G."/>
            <person name="Balakrishnan R."/>
            <person name="Costanzo M.C."/>
            <person name="Dwight S.S."/>
            <person name="Hitz B.C."/>
            <person name="Karra K."/>
            <person name="Nash R.S."/>
            <person name="Weng S."/>
            <person name="Wong E.D."/>
            <person name="Lloyd P."/>
            <person name="Skrzypek M.S."/>
            <person name="Miyasato S.R."/>
            <person name="Simison M."/>
            <person name="Cherry J.M."/>
        </authorList>
    </citation>
    <scope>GENOME REANNOTATION</scope>
    <source>
        <strain>ATCC 204508 / S288c</strain>
    </source>
</reference>
<reference key="3">
    <citation type="journal article" date="2007" name="Genome Res.">
        <title>Approaching a complete repository of sequence-verified protein-encoding clones for Saccharomyces cerevisiae.</title>
        <authorList>
            <person name="Hu Y."/>
            <person name="Rolfs A."/>
            <person name="Bhullar B."/>
            <person name="Murthy T.V.S."/>
            <person name="Zhu C."/>
            <person name="Berger M.F."/>
            <person name="Camargo A.A."/>
            <person name="Kelley F."/>
            <person name="McCarron S."/>
            <person name="Jepson D."/>
            <person name="Richardson A."/>
            <person name="Raphael J."/>
            <person name="Moreira D."/>
            <person name="Taycher E."/>
            <person name="Zuo D."/>
            <person name="Mohr S."/>
            <person name="Kane M.F."/>
            <person name="Williamson J."/>
            <person name="Simpson A.J.G."/>
            <person name="Bulyk M.L."/>
            <person name="Harlow E."/>
            <person name="Marsischky G."/>
            <person name="Kolodner R.D."/>
            <person name="LaBaer J."/>
        </authorList>
    </citation>
    <scope>NUCLEOTIDE SEQUENCE [GENOMIC DNA]</scope>
    <source>
        <strain>ATCC 204508 / S288c</strain>
    </source>
</reference>
<reference key="4">
    <citation type="journal article" date="2003" name="Nature">
        <title>Global analysis of protein localization in budding yeast.</title>
        <authorList>
            <person name="Huh W.-K."/>
            <person name="Falvo J.V."/>
            <person name="Gerke L.C."/>
            <person name="Carroll A.S."/>
            <person name="Howson R.W."/>
            <person name="Weissman J.S."/>
            <person name="O'Shea E.K."/>
        </authorList>
    </citation>
    <scope>SUBCELLULAR LOCATION [LARGE SCALE ANALYSIS]</scope>
</reference>
<reference key="5">
    <citation type="journal article" date="2003" name="Nature">
        <title>Global analysis of protein expression in yeast.</title>
        <authorList>
            <person name="Ghaemmaghami S."/>
            <person name="Huh W.-K."/>
            <person name="Bower K."/>
            <person name="Howson R.W."/>
            <person name="Belle A."/>
            <person name="Dephoure N."/>
            <person name="O'Shea E.K."/>
            <person name="Weissman J.S."/>
        </authorList>
    </citation>
    <scope>LEVEL OF PROTEIN EXPRESSION [LARGE SCALE ANALYSIS]</scope>
</reference>
<reference key="6">
    <citation type="journal article" date="2007" name="FEBS Lett.">
        <title>Rpn13p and Rpn14p are involved in the recognition of ubiquitinated Gcn4p by the 26S proteasome.</title>
        <authorList>
            <person name="Seong K.M."/>
            <person name="Baek J.H."/>
            <person name="Yu M.H."/>
            <person name="Kim J."/>
        </authorList>
    </citation>
    <scope>FUNCTION</scope>
    <scope>INTERACTION WITH RPT5</scope>
</reference>
<reference key="7">
    <citation type="journal article" date="2009" name="Nature">
        <title>Chaperone-mediated pathway of proteasome regulatory particle assembly.</title>
        <authorList>
            <person name="Roelofs J."/>
            <person name="Park S."/>
            <person name="Haas W."/>
            <person name="Tian G."/>
            <person name="McAllister F.E."/>
            <person name="Huo Y."/>
            <person name="Lee B.H."/>
            <person name="Zhang F."/>
            <person name="Shi Y."/>
            <person name="Gygi S.P."/>
            <person name="Finley D."/>
        </authorList>
    </citation>
    <scope>FUNCTION</scope>
    <scope>ASSOCIATION WITH THE PROTEASOME REGULATORY PARTICLE</scope>
</reference>
<reference key="8">
    <citation type="journal article" date="2009" name="Cell">
        <title>Multiple assembly chaperones govern biogenesis of the proteasome regulatory particle base.</title>
        <authorList>
            <person name="Funakoshi M."/>
            <person name="Tomko R.J. Jr."/>
            <person name="Kobayashi H."/>
            <person name="Hochstrasser M."/>
        </authorList>
    </citation>
    <scope>FUNCTION</scope>
    <scope>ASSOCIATION WITH THE 19S REGULATORY PARTICLE OF THE PROTEASOME</scope>
    <scope>IDENTIFICATION BY MASS SPECTROMETRY</scope>
</reference>
<reference key="9">
    <citation type="journal article" date="2009" name="Cell">
        <title>Multiple proteasome-interacting proteins assist the assembly of the yeast 19S regulatory particle.</title>
        <authorList>
            <person name="Saeki Y."/>
            <person name="Toh-E A."/>
            <person name="Kudo T."/>
            <person name="Kawamura H."/>
            <person name="Tanaka K."/>
        </authorList>
    </citation>
    <scope>FUNCTION</scope>
    <scope>SUBCELLULAR LOCATION</scope>
    <scope>ASSOCIATION WITH THE 19S REGULATORY PARTICLE OF THE PROTEASOME</scope>
    <scope>INTERACTION WITH RPT6</scope>
</reference>
<comment type="function">
    <text evidence="2 3 4 5">Acts as a regulatory subunit of the 26 proteasome which is involved in the ATP-dependent degradation of ubiquitinated proteins. Is not a genuine component of the 26S proteasome, but an auxiliary factor that interacts with the proteasomal ATPase of 19S regulatory particle (RP). Acts as a chaperone which regulates the highly structured assembly of the 19S regulatory particle. Involved in the substrate specificity of the 26S proteasome and is especially involved in the degradation of ubiquitinated GCN4. May contribute to the stability of the 26S proteasome in some stress conditions.</text>
</comment>
<comment type="subunit">
    <text evidence="2 5">Associates with the 19S proteasome regulatory particle (RP). Interacts directly with RPT5 and RPT6.</text>
</comment>
<comment type="interaction">
    <interactant intactId="EBI-23691">
        <id>P53196</id>
    </interactant>
    <interactant intactId="EBI-21152">
        <id>P38348</id>
        <label>HSM3</label>
    </interactant>
    <organismsDiffer>false</organismsDiffer>
    <experiments>9</experiments>
</comment>
<comment type="interaction">
    <interactant intactId="EBI-23691">
        <id>P53196</id>
    </interactant>
    <interactant intactId="EBI-14028">
        <id>P50086</id>
        <label>NAS6</label>
    </interactant>
    <organismsDiffer>false</organismsDiffer>
    <experiments>6</experiments>
</comment>
<comment type="interaction">
    <interactant intactId="EBI-23691">
        <id>P53196</id>
    </interactant>
    <interactant intactId="EBI-13910">
        <id>P33299</id>
        <label>RPT1</label>
    </interactant>
    <organismsDiffer>false</organismsDiffer>
    <experiments>9</experiments>
</comment>
<comment type="interaction">
    <interactant intactId="EBI-23691">
        <id>P53196</id>
    </interactant>
    <interactant intactId="EBI-13920">
        <id>P33297</id>
        <label>RPT5</label>
    </interactant>
    <organismsDiffer>false</organismsDiffer>
    <experiments>6</experiments>
</comment>
<comment type="interaction">
    <interactant intactId="EBI-23691">
        <id>P53196</id>
    </interactant>
    <interactant intactId="EBI-13914">
        <id>Q01939</id>
        <label>RPT6</label>
    </interactant>
    <organismsDiffer>false</organismsDiffer>
    <experiments>10</experiments>
</comment>
<comment type="subcellular location">
    <subcellularLocation>
        <location>Cytoplasm</location>
    </subcellularLocation>
    <subcellularLocation>
        <location>Nucleus</location>
    </subcellularLocation>
</comment>
<comment type="miscellaneous">
    <text evidence="1">Present with 2210 molecules/cell in log phase SD medium.</text>
</comment>
<comment type="similarity">
    <text evidence="6">Belongs to the WD repeat PAAF1/RPN14 family.</text>
</comment>
<protein>
    <recommendedName>
        <fullName>26S proteasome regulatory subunit RPN14</fullName>
    </recommendedName>
    <alternativeName>
        <fullName>Proteasome non-ATPase subunit 14</fullName>
    </alternativeName>
</protein>
<sequence>MTKTITVAHIQYDFKAVLEENDENDDEFYINVDKNLNEIKEHKIVVLGNSRGVDAGKGNTFEKVGSHLYKARLDGHDFLFNTIIRDGSKMLKRADYTAVDTAKLQMRRFILGTTEGDIKVLDSNFNLQREIDQAHVSEITKLKFFPSGEALISSSQDMQLKIWSVKDGSNPRTLIGHRATVTDIAIIDRGRNVLSASLDGTIRLWECGTGTTIHTFNRKENPHDGVNSIALFVGTDRQLHEISTSKKNNLEFGTYGKYVIAGHVSGVITVHNVFSKEQTIQLPSKFTCSCNSLTVDGNNANYIYAGYENGMLAQWDLRSPECPVGEFLINEGTPINNVYFAAGALFVSSGFDTSIKLDIISDPESERPAIEFETPTFLVSNDDEVSQFCYVSDDESNGEVLEVGKNNFCALYNLSNP</sequence>
<proteinExistence type="evidence at protein level"/>
<evidence type="ECO:0000269" key="1">
    <source>
    </source>
</evidence>
<evidence type="ECO:0000269" key="2">
    <source>
    </source>
</evidence>
<evidence type="ECO:0000269" key="3">
    <source>
    </source>
</evidence>
<evidence type="ECO:0000269" key="4">
    <source>
    </source>
</evidence>
<evidence type="ECO:0000269" key="5">
    <source>
    </source>
</evidence>
<evidence type="ECO:0000305" key="6"/>
<evidence type="ECO:0007829" key="7">
    <source>
        <dbReference type="PDB" id="3ACP"/>
    </source>
</evidence>
<evidence type="ECO:0007829" key="8">
    <source>
        <dbReference type="PDB" id="3VL1"/>
    </source>
</evidence>
<organism>
    <name type="scientific">Saccharomyces cerevisiae (strain ATCC 204508 / S288c)</name>
    <name type="common">Baker's yeast</name>
    <dbReference type="NCBI Taxonomy" id="559292"/>
    <lineage>
        <taxon>Eukaryota</taxon>
        <taxon>Fungi</taxon>
        <taxon>Dikarya</taxon>
        <taxon>Ascomycota</taxon>
        <taxon>Saccharomycotina</taxon>
        <taxon>Saccharomycetes</taxon>
        <taxon>Saccharomycetales</taxon>
        <taxon>Saccharomycetaceae</taxon>
        <taxon>Saccharomyces</taxon>
    </lineage>
</organism>
<accession>P53196</accession>
<accession>D6VUD4</accession>
<name>RPN14_YEAST</name>